<accession>Q5N675</accession>
<proteinExistence type="inferred from homology"/>
<evidence type="ECO:0000250" key="1">
    <source>
        <dbReference type="UniProtKB" id="P15347"/>
    </source>
</evidence>
<evidence type="ECO:0000255" key="2"/>
<evidence type="ECO:0000305" key="3"/>
<keyword id="KW-0148">Chlorophyll</keyword>
<keyword id="KW-0157">Chromophore</keyword>
<keyword id="KW-0472">Membrane</keyword>
<keyword id="KW-0602">Photosynthesis</keyword>
<keyword id="KW-0603">Photosystem I</keyword>
<keyword id="KW-0346">Stress response</keyword>
<keyword id="KW-0793">Thylakoid</keyword>
<keyword id="KW-0812">Transmembrane</keyword>
<keyword id="KW-1133">Transmembrane helix</keyword>
<dbReference type="EMBL" id="AP008231">
    <property type="protein sequence ID" value="BAD78192.1"/>
    <property type="molecule type" value="Genomic_DNA"/>
</dbReference>
<dbReference type="RefSeq" id="WP_011242315.1">
    <property type="nucleotide sequence ID" value="NZ_CP085785.1"/>
</dbReference>
<dbReference type="SMR" id="Q5N675"/>
<dbReference type="KEGG" id="syc:syc0002_c"/>
<dbReference type="eggNOG" id="ENOG502Z92X">
    <property type="taxonomic scope" value="Bacteria"/>
</dbReference>
<dbReference type="Proteomes" id="UP000001175">
    <property type="component" value="Chromosome"/>
</dbReference>
<dbReference type="GO" id="GO:0009522">
    <property type="term" value="C:photosystem I"/>
    <property type="evidence" value="ECO:0007669"/>
    <property type="project" value="UniProtKB-KW"/>
</dbReference>
<dbReference type="GO" id="GO:0031676">
    <property type="term" value="C:plasma membrane-derived thylakoid membrane"/>
    <property type="evidence" value="ECO:0007669"/>
    <property type="project" value="UniProtKB-SubCell"/>
</dbReference>
<dbReference type="GO" id="GO:0016168">
    <property type="term" value="F:chlorophyll binding"/>
    <property type="evidence" value="ECO:0007669"/>
    <property type="project" value="UniProtKB-KW"/>
</dbReference>
<dbReference type="GO" id="GO:0009767">
    <property type="term" value="P:photosynthetic electron transport chain"/>
    <property type="evidence" value="ECO:0007669"/>
    <property type="project" value="InterPro"/>
</dbReference>
<dbReference type="InterPro" id="IPR000932">
    <property type="entry name" value="PS_antenna-like"/>
</dbReference>
<dbReference type="InterPro" id="IPR036001">
    <property type="entry name" value="PS_II_antenna-like_sf"/>
</dbReference>
<dbReference type="NCBIfam" id="TIGR03041">
    <property type="entry name" value="PS_antenn_a_b"/>
    <property type="match status" value="1"/>
</dbReference>
<dbReference type="Pfam" id="PF00421">
    <property type="entry name" value="PSII"/>
    <property type="match status" value="1"/>
</dbReference>
<dbReference type="SUPFAM" id="SSF161077">
    <property type="entry name" value="Photosystem II antenna protein-like"/>
    <property type="match status" value="1"/>
</dbReference>
<feature type="chain" id="PRO_0000077560" description="Iron stress-induced chlorophyll-binding protein">
    <location>
        <begin position="1"/>
        <end position="342"/>
    </location>
</feature>
<feature type="transmembrane region" description="Helical" evidence="2">
    <location>
        <begin position="25"/>
        <end position="45"/>
    </location>
</feature>
<feature type="transmembrane region" description="Helical" evidence="2">
    <location>
        <begin position="63"/>
        <end position="83"/>
    </location>
</feature>
<feature type="transmembrane region" description="Helical" evidence="2">
    <location>
        <begin position="89"/>
        <end position="109"/>
    </location>
</feature>
<feature type="transmembrane region" description="Helical" evidence="2">
    <location>
        <begin position="204"/>
        <end position="224"/>
    </location>
</feature>
<feature type="transmembrane region" description="Helical" evidence="2">
    <location>
        <begin position="240"/>
        <end position="260"/>
    </location>
</feature>
<feature type="transmembrane region" description="Helical" evidence="2">
    <location>
        <begin position="308"/>
        <end position="328"/>
    </location>
</feature>
<gene>
    <name type="primary">isiA</name>
    <name type="ordered locus">syc0002_c</name>
</gene>
<protein>
    <recommendedName>
        <fullName>Iron stress-induced chlorophyll-binding protein</fullName>
    </recommendedName>
    <alternativeName>
        <fullName>CP43'</fullName>
    </alternativeName>
</protein>
<comment type="function">
    <text evidence="1">Functions as an antenna for photosystem I (PSI) under iron-limiting conditions, when phycobilisomes disappear. In the (PSI)3(Isi3)18 complex most of the harvested energy is probably used by PSI; in other PSI-containing supercomplexes a large part of the energy will probably not be used for light harvesting, but rather is dissipated to protect the organism from light damage.</text>
</comment>
<comment type="cofactor">
    <cofactor evidence="1">
        <name>chlorophyll a</name>
        <dbReference type="ChEBI" id="CHEBI:58416"/>
    </cofactor>
    <text evidence="1">Chlorophyll a.</text>
</comment>
<comment type="cofactor">
    <cofactor evidence="1">
        <name>all-trans-beta-carotene</name>
        <dbReference type="ChEBI" id="CHEBI:17579"/>
    </cofactor>
</comment>
<comment type="subunit">
    <text evidence="1">Under iron-starvation forms a complex with PSI trimers, where the trimer is surrounded by a ring composed of 18 IsiA subunits.</text>
</comment>
<comment type="subcellular location">
    <subcellularLocation>
        <location evidence="1">Cellular thylakoid membrane</location>
        <topology evidence="3">Multi-pass membrane protein</topology>
    </subcellularLocation>
</comment>
<comment type="induction">
    <text evidence="1">By iron stress.</text>
</comment>
<comment type="similarity">
    <text evidence="3">Belongs to the PsbB/PsbC family. IsiA/Pcb subfamily.</text>
</comment>
<organism>
    <name type="scientific">Synechococcus sp. (strain ATCC 27144 / PCC 6301 / SAUG 1402/1)</name>
    <name type="common">Anacystis nidulans</name>
    <dbReference type="NCBI Taxonomy" id="269084"/>
    <lineage>
        <taxon>Bacteria</taxon>
        <taxon>Bacillati</taxon>
        <taxon>Cyanobacteriota</taxon>
        <taxon>Cyanophyceae</taxon>
        <taxon>Synechococcales</taxon>
        <taxon>Synechococcaceae</taxon>
        <taxon>Synechococcus</taxon>
    </lineage>
</organism>
<name>ISIA_SYNP6</name>
<sequence length="342" mass="36976">MQTYNNPEVTYDWWAGNARFANLSGLFIAAHVAQAALIMFWAGAFTLYEISWLTADQSMGEQGLILLPHLATLGLGVGDGGQVTDTYPLFVVGAVHLIASAVLGAGALFHTFRAPSDLAAASGAAKRFHFDWNDPKQLGLILGHHLLFLGVGALLLVAKATTWGGLYDAASQTVRLVTEPTLNPAVIYGYQTHFASIDNLEDLVGGHVYVGVMLIAGGIWHILVPPFQWTKKVLIYSGEAILSYSLGGIALAGFVAAYFCAVNTLAYPVEFYGAPLEIKLGVTPYFADTVQLPFGAHTPRAWLSNAHFFLAFFCLQGHLWHALRAMGFDFRRVEKALSSVEA</sequence>
<reference key="1">
    <citation type="journal article" date="2007" name="Photosyn. Res.">
        <title>Complete nucleotide sequence of the freshwater unicellular cyanobacterium Synechococcus elongatus PCC 6301 chromosome: gene content and organization.</title>
        <authorList>
            <person name="Sugita C."/>
            <person name="Ogata K."/>
            <person name="Shikata M."/>
            <person name="Jikuya H."/>
            <person name="Takano J."/>
            <person name="Furumichi M."/>
            <person name="Kanehisa M."/>
            <person name="Omata T."/>
            <person name="Sugiura M."/>
            <person name="Sugita M."/>
        </authorList>
    </citation>
    <scope>NUCLEOTIDE SEQUENCE [LARGE SCALE GENOMIC DNA]</scope>
    <source>
        <strain>ATCC 27144 / PCC 6301 / SAUG 1402/1</strain>
    </source>
</reference>